<comment type="function">
    <text evidence="1">Catalyzes the reversible transfer of the terminal phosphate group between ATP and AMP. Plays an important role in cellular energy homeostasis and in adenine nucleotide metabolism.</text>
</comment>
<comment type="catalytic activity">
    <reaction evidence="1">
        <text>AMP + ATP = 2 ADP</text>
        <dbReference type="Rhea" id="RHEA:12973"/>
        <dbReference type="ChEBI" id="CHEBI:30616"/>
        <dbReference type="ChEBI" id="CHEBI:456215"/>
        <dbReference type="ChEBI" id="CHEBI:456216"/>
        <dbReference type="EC" id="2.7.4.3"/>
    </reaction>
</comment>
<comment type="pathway">
    <text evidence="1">Purine metabolism; AMP biosynthesis via salvage pathway; AMP from ADP: step 1/1.</text>
</comment>
<comment type="subunit">
    <text evidence="1">Monomer.</text>
</comment>
<comment type="subcellular location">
    <subcellularLocation>
        <location evidence="1">Cytoplasm</location>
    </subcellularLocation>
</comment>
<comment type="domain">
    <text evidence="1">Consists of three domains, a large central CORE domain and two small peripheral domains, NMPbind and LID, which undergo movements during catalysis. The LID domain closes over the site of phosphoryl transfer upon ATP binding. Assembling and dissambling the active center during each catalytic cycle provides an effective means to prevent ATP hydrolysis.</text>
</comment>
<comment type="similarity">
    <text evidence="1">Belongs to the adenylate kinase family.</text>
</comment>
<gene>
    <name evidence="1" type="primary">adk</name>
    <name type="ordered locus">SUN_1507</name>
</gene>
<organism>
    <name type="scientific">Sulfurovum sp. (strain NBC37-1)</name>
    <dbReference type="NCBI Taxonomy" id="387093"/>
    <lineage>
        <taxon>Bacteria</taxon>
        <taxon>Pseudomonadati</taxon>
        <taxon>Campylobacterota</taxon>
        <taxon>Epsilonproteobacteria</taxon>
        <taxon>Campylobacterales</taxon>
        <taxon>Sulfurovaceae</taxon>
        <taxon>Sulfurovum</taxon>
    </lineage>
</organism>
<dbReference type="EC" id="2.7.4.3" evidence="1"/>
<dbReference type="EMBL" id="AP009179">
    <property type="protein sequence ID" value="BAF72458.1"/>
    <property type="molecule type" value="Genomic_DNA"/>
</dbReference>
<dbReference type="RefSeq" id="WP_012083260.1">
    <property type="nucleotide sequence ID" value="NC_009663.1"/>
</dbReference>
<dbReference type="SMR" id="A6QAE9"/>
<dbReference type="STRING" id="387093.SUN_1507"/>
<dbReference type="KEGG" id="sun:SUN_1507"/>
<dbReference type="eggNOG" id="COG0563">
    <property type="taxonomic scope" value="Bacteria"/>
</dbReference>
<dbReference type="HOGENOM" id="CLU_032354_4_1_7"/>
<dbReference type="OrthoDB" id="9805030at2"/>
<dbReference type="UniPathway" id="UPA00588">
    <property type="reaction ID" value="UER00649"/>
</dbReference>
<dbReference type="Proteomes" id="UP000006378">
    <property type="component" value="Chromosome"/>
</dbReference>
<dbReference type="GO" id="GO:0005737">
    <property type="term" value="C:cytoplasm"/>
    <property type="evidence" value="ECO:0007669"/>
    <property type="project" value="UniProtKB-SubCell"/>
</dbReference>
<dbReference type="GO" id="GO:0004017">
    <property type="term" value="F:adenylate kinase activity"/>
    <property type="evidence" value="ECO:0007669"/>
    <property type="project" value="UniProtKB-UniRule"/>
</dbReference>
<dbReference type="GO" id="GO:0005524">
    <property type="term" value="F:ATP binding"/>
    <property type="evidence" value="ECO:0007669"/>
    <property type="project" value="UniProtKB-UniRule"/>
</dbReference>
<dbReference type="GO" id="GO:0044209">
    <property type="term" value="P:AMP salvage"/>
    <property type="evidence" value="ECO:0007669"/>
    <property type="project" value="UniProtKB-UniRule"/>
</dbReference>
<dbReference type="CDD" id="cd01428">
    <property type="entry name" value="ADK"/>
    <property type="match status" value="1"/>
</dbReference>
<dbReference type="Gene3D" id="3.40.50.300">
    <property type="entry name" value="P-loop containing nucleotide triphosphate hydrolases"/>
    <property type="match status" value="1"/>
</dbReference>
<dbReference type="HAMAP" id="MF_00235">
    <property type="entry name" value="Adenylate_kinase_Adk"/>
    <property type="match status" value="1"/>
</dbReference>
<dbReference type="InterPro" id="IPR000850">
    <property type="entry name" value="Adenylat/UMP-CMP_kin"/>
</dbReference>
<dbReference type="InterPro" id="IPR033690">
    <property type="entry name" value="Adenylat_kinase_CS"/>
</dbReference>
<dbReference type="InterPro" id="IPR027417">
    <property type="entry name" value="P-loop_NTPase"/>
</dbReference>
<dbReference type="NCBIfam" id="NF001384">
    <property type="entry name" value="PRK00279.2-2"/>
    <property type="match status" value="1"/>
</dbReference>
<dbReference type="PANTHER" id="PTHR23359">
    <property type="entry name" value="NUCLEOTIDE KINASE"/>
    <property type="match status" value="1"/>
</dbReference>
<dbReference type="Pfam" id="PF00406">
    <property type="entry name" value="ADK"/>
    <property type="match status" value="1"/>
</dbReference>
<dbReference type="PRINTS" id="PR00094">
    <property type="entry name" value="ADENYLTKNASE"/>
</dbReference>
<dbReference type="SUPFAM" id="SSF52540">
    <property type="entry name" value="P-loop containing nucleoside triphosphate hydrolases"/>
    <property type="match status" value="1"/>
</dbReference>
<dbReference type="PROSITE" id="PS00113">
    <property type="entry name" value="ADENYLATE_KINASE"/>
    <property type="match status" value="1"/>
</dbReference>
<name>KAD_SULNB</name>
<proteinExistence type="inferred from homology"/>
<keyword id="KW-0067">ATP-binding</keyword>
<keyword id="KW-0963">Cytoplasm</keyword>
<keyword id="KW-0418">Kinase</keyword>
<keyword id="KW-0545">Nucleotide biosynthesis</keyword>
<keyword id="KW-0547">Nucleotide-binding</keyword>
<keyword id="KW-0808">Transferase</keyword>
<accession>A6QAE9</accession>
<evidence type="ECO:0000255" key="1">
    <source>
        <dbReference type="HAMAP-Rule" id="MF_00235"/>
    </source>
</evidence>
<reference key="1">
    <citation type="journal article" date="2007" name="Proc. Natl. Acad. Sci. U.S.A.">
        <title>Deep-sea vent epsilon-proteobacterial genomes provide insights into emergence of pathogens.</title>
        <authorList>
            <person name="Nakagawa S."/>
            <person name="Takaki Y."/>
            <person name="Shimamura S."/>
            <person name="Reysenbach A.-L."/>
            <person name="Takai K."/>
            <person name="Horikoshi K."/>
        </authorList>
    </citation>
    <scope>NUCLEOTIDE SEQUENCE [LARGE SCALE GENOMIC DNA]</scope>
    <source>
        <strain>NBC37-1</strain>
    </source>
</reference>
<feature type="chain" id="PRO_1000058920" description="Adenylate kinase">
    <location>
        <begin position="1"/>
        <end position="197"/>
    </location>
</feature>
<feature type="region of interest" description="NMP" evidence="1">
    <location>
        <begin position="34"/>
        <end position="63"/>
    </location>
</feature>
<feature type="region of interest" description="LID" evidence="1">
    <location>
        <begin position="130"/>
        <end position="144"/>
    </location>
</feature>
<feature type="binding site" evidence="1">
    <location>
        <begin position="12"/>
        <end position="17"/>
    </location>
    <ligand>
        <name>ATP</name>
        <dbReference type="ChEBI" id="CHEBI:30616"/>
    </ligand>
</feature>
<feature type="binding site" evidence="1">
    <location>
        <position position="35"/>
    </location>
    <ligand>
        <name>AMP</name>
        <dbReference type="ChEBI" id="CHEBI:456215"/>
    </ligand>
</feature>
<feature type="binding site" evidence="1">
    <location>
        <position position="40"/>
    </location>
    <ligand>
        <name>AMP</name>
        <dbReference type="ChEBI" id="CHEBI:456215"/>
    </ligand>
</feature>
<feature type="binding site" evidence="1">
    <location>
        <begin position="61"/>
        <end position="63"/>
    </location>
    <ligand>
        <name>AMP</name>
        <dbReference type="ChEBI" id="CHEBI:456215"/>
    </ligand>
</feature>
<feature type="binding site" evidence="1">
    <location>
        <begin position="88"/>
        <end position="91"/>
    </location>
    <ligand>
        <name>AMP</name>
        <dbReference type="ChEBI" id="CHEBI:456215"/>
    </ligand>
</feature>
<feature type="binding site" evidence="1">
    <location>
        <position position="95"/>
    </location>
    <ligand>
        <name>AMP</name>
        <dbReference type="ChEBI" id="CHEBI:456215"/>
    </ligand>
</feature>
<feature type="binding site" evidence="1">
    <location>
        <position position="131"/>
    </location>
    <ligand>
        <name>ATP</name>
        <dbReference type="ChEBI" id="CHEBI:30616"/>
    </ligand>
</feature>
<feature type="binding site" evidence="1">
    <location>
        <position position="141"/>
    </location>
    <ligand>
        <name>AMP</name>
        <dbReference type="ChEBI" id="CHEBI:456215"/>
    </ligand>
</feature>
<feature type="binding site" evidence="1">
    <location>
        <position position="152"/>
    </location>
    <ligand>
        <name>AMP</name>
        <dbReference type="ChEBI" id="CHEBI:456215"/>
    </ligand>
</feature>
<feature type="binding site" evidence="1">
    <location>
        <position position="180"/>
    </location>
    <ligand>
        <name>ATP</name>
        <dbReference type="ChEBI" id="CHEBI:30616"/>
    </ligand>
</feature>
<protein>
    <recommendedName>
        <fullName evidence="1">Adenylate kinase</fullName>
        <shortName evidence="1">AK</shortName>
        <ecNumber evidence="1">2.7.4.3</ecNumber>
    </recommendedName>
    <alternativeName>
        <fullName evidence="1">ATP-AMP transphosphorylase</fullName>
    </alternativeName>
    <alternativeName>
        <fullName evidence="1">ATP:AMP phosphotransferase</fullName>
    </alternativeName>
    <alternativeName>
        <fullName evidence="1">Adenylate monophosphate kinase</fullName>
    </alternativeName>
</protein>
<sequence>MKKLFLIIGAPGSGKTTDASIIAEKHPDRIVHYSTGDMLREEVASGSELGKTIESYIAKGALVPLNIIIDTIVSAIKHAPVDTILIDGYPRSEEQMTAFDELVSKEDDIDLVSVIEVRVSEEVARERILGRRAEAAPGEERSDDSEEVFNDRMKIYTDPLGAIQRFYTDKGLLTIINGERTLDEVVDEMEKFVLSKI</sequence>